<sequence length="417" mass="46112">MPIQLGLQRMLQLLKHLGNPQESFCAVQIAGTNGKGSICSYIYTSLLQAAIKTGRYTSPHFLEPRDTISINGQIASEEIFNTCWKQVIEVDRRFRTKATEFELLTATAFQCFHHSGVRVAVIETGMGGRLDATNVFEEPVLSIISRICLDHQAFLGNTLEAIAKEKAGIFKKNVPCVVDGLNEVNVLNQLKLSAEETRAHPFYLAKGKSGENKNEWIINTPNWGTNTFSTPLKGDYQGQNLACAVTALDILSSSFSIMLPHVQNGVKNTSWPGRLDIRSVPSLGDILFDGAHNKEAAIELAKFVNSQRREHNKSVSWVVAFTNTKDVTGIMKILLRKGDTVIATNFSSVSGMPWIKSMEPEVIKNSISSESSVECYTADNLTISEILRLAKEKNSSVIVCGSLYLLGDMYRYLKLDV</sequence>
<dbReference type="EC" id="6.3.2.12"/>
<dbReference type="EMBL" id="CU329670">
    <property type="protein sequence ID" value="CAB61458.1"/>
    <property type="molecule type" value="Genomic_DNA"/>
</dbReference>
<dbReference type="PIR" id="T50165">
    <property type="entry name" value="T50165"/>
</dbReference>
<dbReference type="RefSeq" id="NP_592963.1">
    <property type="nucleotide sequence ID" value="NM_001018363.2"/>
</dbReference>
<dbReference type="SMR" id="Q9UTD0"/>
<dbReference type="FunCoup" id="Q9UTD0">
    <property type="interactions" value="226"/>
</dbReference>
<dbReference type="STRING" id="284812.Q9UTD0"/>
<dbReference type="PaxDb" id="4896-SPAC227.09.1"/>
<dbReference type="EnsemblFungi" id="SPAC227.09.1">
    <property type="protein sequence ID" value="SPAC227.09.1:pep"/>
    <property type="gene ID" value="SPAC227.09"/>
</dbReference>
<dbReference type="PomBase" id="SPAC227.09">
    <property type="gene designation" value="fol3"/>
</dbReference>
<dbReference type="VEuPathDB" id="FungiDB:SPAC227.09"/>
<dbReference type="eggNOG" id="KOG2525">
    <property type="taxonomic scope" value="Eukaryota"/>
</dbReference>
<dbReference type="HOGENOM" id="CLU_015869_1_1_1"/>
<dbReference type="InParanoid" id="Q9UTD0"/>
<dbReference type="OMA" id="NENYLVY"/>
<dbReference type="PhylomeDB" id="Q9UTD0"/>
<dbReference type="UniPathway" id="UPA00850"/>
<dbReference type="PRO" id="PR:Q9UTD0"/>
<dbReference type="Proteomes" id="UP000002485">
    <property type="component" value="Chromosome I"/>
</dbReference>
<dbReference type="GO" id="GO:0005737">
    <property type="term" value="C:cytoplasm"/>
    <property type="evidence" value="ECO:0000318"/>
    <property type="project" value="GO_Central"/>
</dbReference>
<dbReference type="GO" id="GO:0005829">
    <property type="term" value="C:cytosol"/>
    <property type="evidence" value="ECO:0007005"/>
    <property type="project" value="PomBase"/>
</dbReference>
<dbReference type="GO" id="GO:0005739">
    <property type="term" value="C:mitochondrion"/>
    <property type="evidence" value="ECO:0007005"/>
    <property type="project" value="PomBase"/>
</dbReference>
<dbReference type="GO" id="GO:0005524">
    <property type="term" value="F:ATP binding"/>
    <property type="evidence" value="ECO:0007669"/>
    <property type="project" value="UniProtKB-KW"/>
</dbReference>
<dbReference type="GO" id="GO:0008841">
    <property type="term" value="F:dihydrofolate synthase activity"/>
    <property type="evidence" value="ECO:0000318"/>
    <property type="project" value="GO_Central"/>
</dbReference>
<dbReference type="GO" id="GO:0046872">
    <property type="term" value="F:metal ion binding"/>
    <property type="evidence" value="ECO:0007669"/>
    <property type="project" value="UniProtKB-KW"/>
</dbReference>
<dbReference type="GO" id="GO:0004326">
    <property type="term" value="F:tetrahydrofolylpolyglutamate synthase activity"/>
    <property type="evidence" value="ECO:0000318"/>
    <property type="project" value="GO_Central"/>
</dbReference>
<dbReference type="GO" id="GO:0009396">
    <property type="term" value="P:folic acid-containing compound biosynthetic process"/>
    <property type="evidence" value="ECO:0000318"/>
    <property type="project" value="GO_Central"/>
</dbReference>
<dbReference type="GO" id="GO:0006536">
    <property type="term" value="P:glutamate metabolic process"/>
    <property type="evidence" value="ECO:0000303"/>
    <property type="project" value="PomBase"/>
</dbReference>
<dbReference type="GO" id="GO:0006730">
    <property type="term" value="P:one-carbon metabolic process"/>
    <property type="evidence" value="ECO:0007669"/>
    <property type="project" value="UniProtKB-KW"/>
</dbReference>
<dbReference type="FunFam" id="3.40.1190.10:FF:000010">
    <property type="entry name" value="Dihydrofolate synthetase"/>
    <property type="match status" value="1"/>
</dbReference>
<dbReference type="FunFam" id="3.90.190.20:FF:000010">
    <property type="entry name" value="Dihydrofolate synthetase"/>
    <property type="match status" value="1"/>
</dbReference>
<dbReference type="Gene3D" id="3.90.190.20">
    <property type="entry name" value="Mur ligase, C-terminal domain"/>
    <property type="match status" value="1"/>
</dbReference>
<dbReference type="Gene3D" id="3.40.1190.10">
    <property type="entry name" value="Mur-like, catalytic domain"/>
    <property type="match status" value="1"/>
</dbReference>
<dbReference type="InterPro" id="IPR001645">
    <property type="entry name" value="Folylpolyglutamate_synth"/>
</dbReference>
<dbReference type="InterPro" id="IPR036565">
    <property type="entry name" value="Mur-like_cat_sf"/>
</dbReference>
<dbReference type="InterPro" id="IPR036615">
    <property type="entry name" value="Mur_ligase_C_dom_sf"/>
</dbReference>
<dbReference type="InterPro" id="IPR013221">
    <property type="entry name" value="Mur_ligase_cen"/>
</dbReference>
<dbReference type="NCBIfam" id="TIGR01499">
    <property type="entry name" value="folC"/>
    <property type="match status" value="1"/>
</dbReference>
<dbReference type="PANTHER" id="PTHR11136:SF0">
    <property type="entry name" value="DIHYDROFOLATE SYNTHETASE-RELATED"/>
    <property type="match status" value="1"/>
</dbReference>
<dbReference type="PANTHER" id="PTHR11136">
    <property type="entry name" value="FOLYLPOLYGLUTAMATE SYNTHASE-RELATED"/>
    <property type="match status" value="1"/>
</dbReference>
<dbReference type="Pfam" id="PF08245">
    <property type="entry name" value="Mur_ligase_M"/>
    <property type="match status" value="1"/>
</dbReference>
<dbReference type="PIRSF" id="PIRSF001563">
    <property type="entry name" value="Folylpolyglu_synth"/>
    <property type="match status" value="1"/>
</dbReference>
<dbReference type="SUPFAM" id="SSF53623">
    <property type="entry name" value="MurD-like peptide ligases, catalytic domain"/>
    <property type="match status" value="1"/>
</dbReference>
<dbReference type="SUPFAM" id="SSF53244">
    <property type="entry name" value="MurD-like peptide ligases, peptide-binding domain"/>
    <property type="match status" value="1"/>
</dbReference>
<feature type="chain" id="PRO_0000339137" description="Probable dihydrofolate synthetase">
    <location>
        <begin position="1"/>
        <end position="417"/>
    </location>
</feature>
<feature type="binding site" evidence="2">
    <location>
        <begin position="34"/>
        <end position="37"/>
    </location>
    <ligand>
        <name>ATP</name>
        <dbReference type="ChEBI" id="CHEBI:30616"/>
    </ligand>
</feature>
<feature type="binding site" evidence="2">
    <location>
        <position position="58"/>
    </location>
    <ligand>
        <name>Mg(2+)</name>
        <dbReference type="ChEBI" id="CHEBI:18420"/>
        <label>1</label>
    </ligand>
</feature>
<feature type="binding site" evidence="2">
    <location>
        <position position="123"/>
    </location>
    <ligand>
        <name>Mg(2+)</name>
        <dbReference type="ChEBI" id="CHEBI:18420"/>
        <label>1</label>
    </ligand>
</feature>
<feature type="binding site" evidence="2">
    <location>
        <position position="151"/>
    </location>
    <ligand>
        <name>Mg(2+)</name>
        <dbReference type="ChEBI" id="CHEBI:18420"/>
        <label>2</label>
    </ligand>
</feature>
<feature type="binding site" evidence="2">
    <location>
        <position position="274"/>
    </location>
    <ligand>
        <name>ATP</name>
        <dbReference type="ChEBI" id="CHEBI:30616"/>
    </ligand>
</feature>
<feature type="binding site" evidence="2">
    <location>
        <position position="289"/>
    </location>
    <ligand>
        <name>ATP</name>
        <dbReference type="ChEBI" id="CHEBI:30616"/>
    </ligand>
</feature>
<gene>
    <name type="primary">fol3</name>
    <name type="ORF">SPAC227.09</name>
</gene>
<evidence type="ECO:0000250" key="1"/>
<evidence type="ECO:0000250" key="2">
    <source>
        <dbReference type="UniProtKB" id="P08192"/>
    </source>
</evidence>
<evidence type="ECO:0000305" key="3"/>
<reference key="1">
    <citation type="journal article" date="2002" name="Nature">
        <title>The genome sequence of Schizosaccharomyces pombe.</title>
        <authorList>
            <person name="Wood V."/>
            <person name="Gwilliam R."/>
            <person name="Rajandream M.A."/>
            <person name="Lyne M.H."/>
            <person name="Lyne R."/>
            <person name="Stewart A."/>
            <person name="Sgouros J.G."/>
            <person name="Peat N."/>
            <person name="Hayles J."/>
            <person name="Baker S.G."/>
            <person name="Basham D."/>
            <person name="Bowman S."/>
            <person name="Brooks K."/>
            <person name="Brown D."/>
            <person name="Brown S."/>
            <person name="Chillingworth T."/>
            <person name="Churcher C.M."/>
            <person name="Collins M."/>
            <person name="Connor R."/>
            <person name="Cronin A."/>
            <person name="Davis P."/>
            <person name="Feltwell T."/>
            <person name="Fraser A."/>
            <person name="Gentles S."/>
            <person name="Goble A."/>
            <person name="Hamlin N."/>
            <person name="Harris D.E."/>
            <person name="Hidalgo J."/>
            <person name="Hodgson G."/>
            <person name="Holroyd S."/>
            <person name="Hornsby T."/>
            <person name="Howarth S."/>
            <person name="Huckle E.J."/>
            <person name="Hunt S."/>
            <person name="Jagels K."/>
            <person name="James K.D."/>
            <person name="Jones L."/>
            <person name="Jones M."/>
            <person name="Leather S."/>
            <person name="McDonald S."/>
            <person name="McLean J."/>
            <person name="Mooney P."/>
            <person name="Moule S."/>
            <person name="Mungall K.L."/>
            <person name="Murphy L.D."/>
            <person name="Niblett D."/>
            <person name="Odell C."/>
            <person name="Oliver K."/>
            <person name="O'Neil S."/>
            <person name="Pearson D."/>
            <person name="Quail M.A."/>
            <person name="Rabbinowitsch E."/>
            <person name="Rutherford K.M."/>
            <person name="Rutter S."/>
            <person name="Saunders D."/>
            <person name="Seeger K."/>
            <person name="Sharp S."/>
            <person name="Skelton J."/>
            <person name="Simmonds M.N."/>
            <person name="Squares R."/>
            <person name="Squares S."/>
            <person name="Stevens K."/>
            <person name="Taylor K."/>
            <person name="Taylor R.G."/>
            <person name="Tivey A."/>
            <person name="Walsh S.V."/>
            <person name="Warren T."/>
            <person name="Whitehead S."/>
            <person name="Woodward J.R."/>
            <person name="Volckaert G."/>
            <person name="Aert R."/>
            <person name="Robben J."/>
            <person name="Grymonprez B."/>
            <person name="Weltjens I."/>
            <person name="Vanstreels E."/>
            <person name="Rieger M."/>
            <person name="Schaefer M."/>
            <person name="Mueller-Auer S."/>
            <person name="Gabel C."/>
            <person name="Fuchs M."/>
            <person name="Duesterhoeft A."/>
            <person name="Fritzc C."/>
            <person name="Holzer E."/>
            <person name="Moestl D."/>
            <person name="Hilbert H."/>
            <person name="Borzym K."/>
            <person name="Langer I."/>
            <person name="Beck A."/>
            <person name="Lehrach H."/>
            <person name="Reinhardt R."/>
            <person name="Pohl T.M."/>
            <person name="Eger P."/>
            <person name="Zimmermann W."/>
            <person name="Wedler H."/>
            <person name="Wambutt R."/>
            <person name="Purnelle B."/>
            <person name="Goffeau A."/>
            <person name="Cadieu E."/>
            <person name="Dreano S."/>
            <person name="Gloux S."/>
            <person name="Lelaure V."/>
            <person name="Mottier S."/>
            <person name="Galibert F."/>
            <person name="Aves S.J."/>
            <person name="Xiang Z."/>
            <person name="Hunt C."/>
            <person name="Moore K."/>
            <person name="Hurst S.M."/>
            <person name="Lucas M."/>
            <person name="Rochet M."/>
            <person name="Gaillardin C."/>
            <person name="Tallada V.A."/>
            <person name="Garzon A."/>
            <person name="Thode G."/>
            <person name="Daga R.R."/>
            <person name="Cruzado L."/>
            <person name="Jimenez J."/>
            <person name="Sanchez M."/>
            <person name="del Rey F."/>
            <person name="Benito J."/>
            <person name="Dominguez A."/>
            <person name="Revuelta J.L."/>
            <person name="Moreno S."/>
            <person name="Armstrong J."/>
            <person name="Forsburg S.L."/>
            <person name="Cerutti L."/>
            <person name="Lowe T."/>
            <person name="McCombie W.R."/>
            <person name="Paulsen I."/>
            <person name="Potashkin J."/>
            <person name="Shpakovski G.V."/>
            <person name="Ussery D."/>
            <person name="Barrell B.G."/>
            <person name="Nurse P."/>
        </authorList>
    </citation>
    <scope>NUCLEOTIDE SEQUENCE [LARGE SCALE GENOMIC DNA]</scope>
    <source>
        <strain>972 / ATCC 24843</strain>
    </source>
</reference>
<protein>
    <recommendedName>
        <fullName>Probable dihydrofolate synthetase</fullName>
        <shortName>DHFS</shortName>
        <ecNumber>6.3.2.12</ecNumber>
    </recommendedName>
</protein>
<keyword id="KW-0067">ATP-binding</keyword>
<keyword id="KW-0436">Ligase</keyword>
<keyword id="KW-0460">Magnesium</keyword>
<keyword id="KW-0479">Metal-binding</keyword>
<keyword id="KW-0547">Nucleotide-binding</keyword>
<keyword id="KW-0554">One-carbon metabolism</keyword>
<keyword id="KW-1185">Reference proteome</keyword>
<proteinExistence type="inferred from homology"/>
<name>FOLD_SCHPO</name>
<comment type="function">
    <text evidence="1">Glutamate-adding enzyme which catalyzes the binding of the first glutamyl side chain to dihydropteroate. Leads to the de nove synthesis of tetrahydrofolate. de novo (By similarity).</text>
</comment>
<comment type="catalytic activity">
    <reaction>
        <text>7,8-dihydropteroate + L-glutamate + ATP = 7,8-dihydrofolate + ADP + phosphate + H(+)</text>
        <dbReference type="Rhea" id="RHEA:23584"/>
        <dbReference type="ChEBI" id="CHEBI:15378"/>
        <dbReference type="ChEBI" id="CHEBI:17839"/>
        <dbReference type="ChEBI" id="CHEBI:29985"/>
        <dbReference type="ChEBI" id="CHEBI:30616"/>
        <dbReference type="ChEBI" id="CHEBI:43474"/>
        <dbReference type="ChEBI" id="CHEBI:57451"/>
        <dbReference type="ChEBI" id="CHEBI:456216"/>
        <dbReference type="EC" id="6.3.2.12"/>
    </reaction>
</comment>
<comment type="pathway">
    <text>Cofactor biosynthesis; tetrahydrofolylpolyglutamate biosynthesis.</text>
</comment>
<comment type="similarity">
    <text evidence="3">Belongs to the folylpolyglutamate synthase family.</text>
</comment>
<organism>
    <name type="scientific">Schizosaccharomyces pombe (strain 972 / ATCC 24843)</name>
    <name type="common">Fission yeast</name>
    <dbReference type="NCBI Taxonomy" id="284812"/>
    <lineage>
        <taxon>Eukaryota</taxon>
        <taxon>Fungi</taxon>
        <taxon>Dikarya</taxon>
        <taxon>Ascomycota</taxon>
        <taxon>Taphrinomycotina</taxon>
        <taxon>Schizosaccharomycetes</taxon>
        <taxon>Schizosaccharomycetales</taxon>
        <taxon>Schizosaccharomycetaceae</taxon>
        <taxon>Schizosaccharomyces</taxon>
    </lineage>
</organism>
<accession>Q9UTD0</accession>